<reference evidence="6" key="1">
    <citation type="journal article" date="2002" name="Nature">
        <title>Genome sequence of the human malaria parasite Plasmodium falciparum.</title>
        <authorList>
            <person name="Gardner M.J."/>
            <person name="Hall N."/>
            <person name="Fung E."/>
            <person name="White O."/>
            <person name="Berriman M."/>
            <person name="Hyman R.W."/>
            <person name="Carlton J.M."/>
            <person name="Pain A."/>
            <person name="Nelson K.E."/>
            <person name="Bowman S."/>
            <person name="Paulsen I.T."/>
            <person name="James K.D."/>
            <person name="Eisen J.A."/>
            <person name="Rutherford K.M."/>
            <person name="Salzberg S.L."/>
            <person name="Craig A."/>
            <person name="Kyes S."/>
            <person name="Chan M.-S."/>
            <person name="Nene V."/>
            <person name="Shallom S.J."/>
            <person name="Suh B."/>
            <person name="Peterson J."/>
            <person name="Angiuoli S."/>
            <person name="Pertea M."/>
            <person name="Allen J."/>
            <person name="Selengut J."/>
            <person name="Haft D."/>
            <person name="Mather M.W."/>
            <person name="Vaidya A.B."/>
            <person name="Martin D.M.A."/>
            <person name="Fairlamb A.H."/>
            <person name="Fraunholz M.J."/>
            <person name="Roos D.S."/>
            <person name="Ralph S.A."/>
            <person name="McFadden G.I."/>
            <person name="Cummings L.M."/>
            <person name="Subramanian G.M."/>
            <person name="Mungall C."/>
            <person name="Venter J.C."/>
            <person name="Carucci D.J."/>
            <person name="Hoffman S.L."/>
            <person name="Newbold C."/>
            <person name="Davis R.W."/>
            <person name="Fraser C.M."/>
            <person name="Barrell B.G."/>
        </authorList>
    </citation>
    <scope>NUCLEOTIDE SEQUENCE [LARGE SCALE GENOMIC DNA]</scope>
    <source>
        <strain evidence="6">3D7</strain>
    </source>
</reference>
<reference evidence="6" key="2">
    <citation type="journal article" date="2002" name="Nature">
        <title>Sequence of Plasmodium falciparum chromosomes 1, 3-9 and 13.</title>
        <authorList>
            <person name="Hall N."/>
            <person name="Pain A."/>
            <person name="Berriman M."/>
            <person name="Churcher C.M."/>
            <person name="Harris B."/>
            <person name="Harris D."/>
            <person name="Mungall K.L."/>
            <person name="Bowman S."/>
            <person name="Atkin R."/>
            <person name="Baker S."/>
            <person name="Barron A."/>
            <person name="Brooks K."/>
            <person name="Buckee C.O."/>
            <person name="Burrows C."/>
            <person name="Cherevach I."/>
            <person name="Chillingworth C."/>
            <person name="Chillingworth T."/>
            <person name="Christodoulou Z."/>
            <person name="Clark L."/>
            <person name="Clark R."/>
            <person name="Corton C."/>
            <person name="Cronin A."/>
            <person name="Davies R.M."/>
            <person name="Davis P."/>
            <person name="Dear P."/>
            <person name="Dearden F."/>
            <person name="Doggett J."/>
            <person name="Feltwell T."/>
            <person name="Goble A."/>
            <person name="Goodhead I."/>
            <person name="Gwilliam R."/>
            <person name="Hamlin N."/>
            <person name="Hance Z."/>
            <person name="Harper D."/>
            <person name="Hauser H."/>
            <person name="Hornsby T."/>
            <person name="Holroyd S."/>
            <person name="Horrocks P."/>
            <person name="Humphray S."/>
            <person name="Jagels K."/>
            <person name="James K.D."/>
            <person name="Johnson D."/>
            <person name="Kerhornou A."/>
            <person name="Knights A."/>
            <person name="Konfortov B."/>
            <person name="Kyes S."/>
            <person name="Larke N."/>
            <person name="Lawson D."/>
            <person name="Lennard N."/>
            <person name="Line A."/>
            <person name="Maddison M."/>
            <person name="Mclean J."/>
            <person name="Mooney P."/>
            <person name="Moule S."/>
            <person name="Murphy L."/>
            <person name="Oliver K."/>
            <person name="Ormond D."/>
            <person name="Price C."/>
            <person name="Quail M.A."/>
            <person name="Rabbinowitsch E."/>
            <person name="Rajandream M.A."/>
            <person name="Rutter S."/>
            <person name="Rutherford K.M."/>
            <person name="Sanders M."/>
            <person name="Simmonds M."/>
            <person name="Seeger K."/>
            <person name="Sharp S."/>
            <person name="Smith R."/>
            <person name="Squares R."/>
            <person name="Squares S."/>
            <person name="Stevens K."/>
            <person name="Taylor K."/>
            <person name="Tivey A."/>
            <person name="Unwin L."/>
            <person name="Whitehead S."/>
            <person name="Woodward J.R."/>
            <person name="Sulston J.E."/>
            <person name="Craig A."/>
            <person name="Newbold C."/>
            <person name="Barrell B.G."/>
        </authorList>
    </citation>
    <scope>NUCLEOTIDE SEQUENCE [LARGE SCALE GENOMIC DNA]</scope>
    <source>
        <strain evidence="6">3D7</strain>
    </source>
</reference>
<reference evidence="4" key="3">
    <citation type="journal article" date="2007" name="J. Infect. Dis.">
        <title>Features of apoptosis in Plasmodium falciparum erythrocytic stage through a putative role of PfMCA1 metacaspase-like protein.</title>
        <authorList>
            <person name="Meslin B."/>
            <person name="Barnadas C."/>
            <person name="Boni V."/>
            <person name="Latour C."/>
            <person name="De Monbrison F."/>
            <person name="Kaiser K."/>
            <person name="Picot S."/>
        </authorList>
    </citation>
    <scope>PROTEOLYTIC CLEAVAGE</scope>
</reference>
<reference evidence="4" key="4">
    <citation type="journal article" date="2011" name="PLoS ONE">
        <title>Plasmodium falciparum metacaspase PfMCA-1 triggers a z-VAD-fmk inhibitable protease to promote cell death.</title>
        <authorList>
            <person name="Meslin B."/>
            <person name="Beavogui A.H."/>
            <person name="Fasel N."/>
            <person name="Picot S."/>
        </authorList>
    </citation>
    <scope>FUNCTION</scope>
    <scope>CATALYTIC ACTIVITY</scope>
    <scope>ACTIVITY REGULATION</scope>
    <scope>PROTEOLYTIC CLEAVAGE</scope>
</reference>
<dbReference type="EC" id="3.4.22.-" evidence="2"/>
<dbReference type="EMBL" id="AL844509">
    <property type="protein sequence ID" value="CAD52669.1"/>
    <property type="molecule type" value="Genomic_DNA"/>
</dbReference>
<dbReference type="RefSeq" id="XP_001350260.1">
    <property type="nucleotide sequence ID" value="XM_001350224.1"/>
</dbReference>
<dbReference type="SMR" id="Q8IDF3"/>
<dbReference type="FunCoup" id="Q8IDF3">
    <property type="interactions" value="317"/>
</dbReference>
<dbReference type="MEROPS" id="C14.041"/>
<dbReference type="PaxDb" id="5833-PF13_0289"/>
<dbReference type="EnsemblProtists" id="CAD52669">
    <property type="protein sequence ID" value="CAD52669"/>
    <property type="gene ID" value="PF3D7_1354800"/>
</dbReference>
<dbReference type="GeneID" id="814253"/>
<dbReference type="KEGG" id="pfa:PF3D7_1354800"/>
<dbReference type="VEuPathDB" id="PlasmoDB:PF3D7_1354800"/>
<dbReference type="HOGENOM" id="CLU_455980_0_0_1"/>
<dbReference type="InParanoid" id="Q8IDF3"/>
<dbReference type="OMA" id="VYWKNKK"/>
<dbReference type="OrthoDB" id="3223806at2759"/>
<dbReference type="PhylomeDB" id="Q8IDF3"/>
<dbReference type="Proteomes" id="UP000001450">
    <property type="component" value="Chromosome 13"/>
</dbReference>
<dbReference type="GO" id="GO:0005737">
    <property type="term" value="C:cytoplasm"/>
    <property type="evidence" value="ECO:0000318"/>
    <property type="project" value="GO_Central"/>
</dbReference>
<dbReference type="GO" id="GO:0004198">
    <property type="term" value="F:calcium-dependent cysteine-type endopeptidase activity"/>
    <property type="evidence" value="ECO:0000314"/>
    <property type="project" value="UniProtKB"/>
</dbReference>
<dbReference type="GO" id="GO:0004197">
    <property type="term" value="F:cysteine-type endopeptidase activity"/>
    <property type="evidence" value="ECO:0000318"/>
    <property type="project" value="GO_Central"/>
</dbReference>
<dbReference type="GO" id="GO:0006915">
    <property type="term" value="P:apoptotic process"/>
    <property type="evidence" value="ECO:0000314"/>
    <property type="project" value="GeneDB"/>
</dbReference>
<dbReference type="GO" id="GO:0006508">
    <property type="term" value="P:proteolysis"/>
    <property type="evidence" value="ECO:0000314"/>
    <property type="project" value="UniProtKB"/>
</dbReference>
<dbReference type="FunFam" id="3.40.50.12660:FF:000002">
    <property type="entry name" value="Metacaspase 1"/>
    <property type="match status" value="1"/>
</dbReference>
<dbReference type="Gene3D" id="3.40.50.12660">
    <property type="match status" value="1"/>
</dbReference>
<dbReference type="Gene3D" id="2.60.40.150">
    <property type="entry name" value="C2 domain"/>
    <property type="match status" value="1"/>
</dbReference>
<dbReference type="InterPro" id="IPR000008">
    <property type="entry name" value="C2_dom"/>
</dbReference>
<dbReference type="InterPro" id="IPR035892">
    <property type="entry name" value="C2_domain_sf"/>
</dbReference>
<dbReference type="InterPro" id="IPR029030">
    <property type="entry name" value="Caspase-like_dom_sf"/>
</dbReference>
<dbReference type="InterPro" id="IPR050452">
    <property type="entry name" value="Metacaspase"/>
</dbReference>
<dbReference type="InterPro" id="IPR011600">
    <property type="entry name" value="Pept_C14_caspase"/>
</dbReference>
<dbReference type="PANTHER" id="PTHR48104:SF30">
    <property type="entry name" value="METACASPASE-1"/>
    <property type="match status" value="1"/>
</dbReference>
<dbReference type="PANTHER" id="PTHR48104">
    <property type="entry name" value="METACASPASE-4"/>
    <property type="match status" value="1"/>
</dbReference>
<dbReference type="Pfam" id="PF00168">
    <property type="entry name" value="C2"/>
    <property type="match status" value="1"/>
</dbReference>
<dbReference type="Pfam" id="PF00656">
    <property type="entry name" value="Peptidase_C14"/>
    <property type="match status" value="1"/>
</dbReference>
<dbReference type="SUPFAM" id="SSF49562">
    <property type="entry name" value="C2 domain (Calcium/lipid-binding domain, CaLB)"/>
    <property type="match status" value="1"/>
</dbReference>
<dbReference type="SUPFAM" id="SSF52129">
    <property type="entry name" value="Caspase-like"/>
    <property type="match status" value="1"/>
</dbReference>
<protein>
    <recommendedName>
        <fullName evidence="3">Metacaspase-1</fullName>
        <ecNumber evidence="2">3.4.22.-</ecNumber>
    </recommendedName>
    <alternativeName>
        <fullName evidence="3">PfMCA1</fullName>
    </alternativeName>
    <component>
        <recommendedName>
            <fullName evidence="1">Large subunit p20</fullName>
        </recommendedName>
    </component>
    <component>
        <recommendedName>
            <fullName evidence="1">Small subunit p10</fullName>
        </recommendedName>
    </component>
</protein>
<proteinExistence type="evidence at protein level"/>
<gene>
    <name evidence="3" type="primary">MCA1</name>
    <name evidence="5" type="ORF">PF3D7_1354800</name>
</gene>
<feature type="propeptide" id="PRO_0000451178" evidence="4">
    <location>
        <begin position="1"/>
        <end status="unknown"/>
    </location>
</feature>
<feature type="chain" id="PRO_0000451180" description="Large subunit p20" evidence="4">
    <location>
        <begin status="unknown"/>
        <end position="473"/>
    </location>
</feature>
<feature type="chain" id="PRO_0000451181" description="Small subunit p10" evidence="4">
    <location>
        <begin position="474"/>
        <end position="613"/>
    </location>
</feature>
<feature type="chain" id="PRO_0000451179" description="Metacaspase-1">
    <location>
        <begin status="unknown"/>
        <end position="613"/>
    </location>
</feature>
<feature type="active site" evidence="1">
    <location>
        <position position="404"/>
    </location>
</feature>
<feature type="active site" evidence="1">
    <location>
        <position position="460"/>
    </location>
</feature>
<organism evidence="6">
    <name type="scientific">Plasmodium falciparum (isolate 3D7)</name>
    <dbReference type="NCBI Taxonomy" id="36329"/>
    <lineage>
        <taxon>Eukaryota</taxon>
        <taxon>Sar</taxon>
        <taxon>Alveolata</taxon>
        <taxon>Apicomplexa</taxon>
        <taxon>Aconoidasida</taxon>
        <taxon>Haemosporida</taxon>
        <taxon>Plasmodiidae</taxon>
        <taxon>Plasmodium</taxon>
        <taxon>Plasmodium (Laverania)</taxon>
    </lineage>
</organism>
<name>MCA1_PLAF7</name>
<evidence type="ECO:0000250" key="1">
    <source>
        <dbReference type="UniProtKB" id="Q08601"/>
    </source>
</evidence>
<evidence type="ECO:0000269" key="2">
    <source>
    </source>
</evidence>
<evidence type="ECO:0000303" key="3">
    <source>
    </source>
</evidence>
<evidence type="ECO:0000305" key="4"/>
<evidence type="ECO:0000312" key="5">
    <source>
        <dbReference type="EMBL" id="CAD52669.1"/>
    </source>
</evidence>
<evidence type="ECO:0000312" key="6">
    <source>
        <dbReference type="Proteomes" id="UP000001450"/>
    </source>
</evidence>
<sequence length="613" mass="71690">MEKIYVKIYELSGLEDKDNFSCYIKIYWQNKKYKSCILQKNPYKFNEIFLLPIDIKNNVKDEKNNILSIEVWSSGILNNNKIAYTFFELDHIRRERISSEKINLIDVVKKCTLQISVHIINNNQDILFCNIKDIFGNNKNDKEIHDAILKYGGNERHIIKELRKEKEIGQYNNIYFNDYVNVLNTDPSQNYIYNDMPKITPNNIYNNMNNDQTNHTYLKAPNSLYNNENTIYSSNVHYSTYMNNSPTYKNSNNMNHVTNMYASNDLHNSNHFKPHSNAYSTINYDNNNYIYPQNHTNIYNRASPGSDQTLYFSPCNQKKALLIGINYYGTKYELNGCTNDTLRMKDLLVTKYKFYDSSNNIVRLIDNEANPNYRPTRRNILSALMWLTRDNKPGDILFFLFSGHGSQEKDHNHIEKDGYNESILPSDFETEGVIIDDELHKYLIQPLNEGVKLIAVVDSCNSGSSIDLAYKYKLKSKKWKEDKNPFHVICDVTQFSGCKDKEVSYEVNTGQIAPGGSLVTAMVQILKNNMNTPSIITYEYLLHNIHAHVKQHSNQTVTFMSSQKFNMNRLFDFEHIIKNKNNQLGQIINKYIEKNKSKNKNKLKHELKNLFFF</sequence>
<accession>Q8IDF3</accession>
<comment type="function">
    <text evidence="2">Cysteine protease that cleaves specifically after arginine or lysine residues (PubMed:21858231). May play a role in apoptosis (PubMed:21858231).</text>
</comment>
<comment type="activity regulation">
    <text evidence="2">Activated by Ca(2+).</text>
</comment>
<comment type="subunit">
    <text evidence="1">Monomer.</text>
</comment>
<comment type="similarity">
    <text evidence="4">Belongs to the peptidase C14B family.</text>
</comment>
<keyword id="KW-0053">Apoptosis</keyword>
<keyword id="KW-0378">Hydrolase</keyword>
<keyword id="KW-0645">Protease</keyword>
<keyword id="KW-1185">Reference proteome</keyword>
<keyword id="KW-0788">Thiol protease</keyword>
<keyword id="KW-0865">Zymogen</keyword>